<keyword id="KW-0119">Carbohydrate metabolism</keyword>
<keyword id="KW-0963">Cytoplasm</keyword>
<keyword id="KW-0456">Lyase</keyword>
<keyword id="KW-1185">Reference proteome</keyword>
<keyword id="KW-0704">Schiff base</keyword>
<name>NPLB_XENLA</name>
<accession>Q5XGL8</accession>
<protein>
    <recommendedName>
        <fullName>N-acetylneuraminate lyase B</fullName>
        <shortName>NALase B</shortName>
        <ecNumber>4.1.3.3</ecNumber>
    </recommendedName>
    <alternativeName>
        <fullName>N-acetylneuraminate pyruvate-lyase B</fullName>
    </alternativeName>
    <alternativeName>
        <fullName>N-acetylneuraminic acid aldolase B</fullName>
    </alternativeName>
    <alternativeName>
        <fullName>Sialate lyase B</fullName>
    </alternativeName>
    <alternativeName>
        <fullName>Sialate-pyruvate lyase B</fullName>
    </alternativeName>
    <alternativeName>
        <fullName>Sialic acid aldolase B</fullName>
    </alternativeName>
    <alternativeName>
        <fullName>Sialic acid lyase B</fullName>
    </alternativeName>
</protein>
<sequence length="266" mass="29313">MAFTGKRLKGLIAATFTPMTPNSDINLLVIEQYVDYLVQKQHIRNIFVNGTTGEGMSLSICERKRLTEEWVKHARGKMDNVIVHVGCLGLSDSKDLAAHAASCGADAISAVCPSFLKPANLDALVLYLKDVASAAPSLPFYYYHIPKLTGITYQIYELLGKVKENIPSFRGVKFSDVNLMDFSLCVSEYKEFDCLYGVDEQLLGALAFGAHGAVGSTYNYLGNKNGDMLEAFEAGNLQKARKIQCSLQEFLYFVFDMAHFSGSKAN</sequence>
<evidence type="ECO:0000250" key="1"/>
<evidence type="ECO:0000250" key="2">
    <source>
        <dbReference type="UniProtKB" id="P0A6L4"/>
    </source>
</evidence>
<evidence type="ECO:0000305" key="3"/>
<feature type="chain" id="PRO_0000273360" description="N-acetylneuraminate lyase B">
    <location>
        <begin position="1"/>
        <end position="266"/>
    </location>
</feature>
<feature type="active site" description="Proton donor" evidence="2">
    <location>
        <position position="143"/>
    </location>
</feature>
<feature type="active site" description="Schiff-base intermediate with substrate" evidence="2">
    <location>
        <position position="173"/>
    </location>
</feature>
<feature type="binding site" evidence="2">
    <location>
        <position position="51"/>
    </location>
    <ligand>
        <name>aceneuramate</name>
        <dbReference type="ChEBI" id="CHEBI:173083"/>
    </ligand>
</feature>
<feature type="binding site" evidence="2">
    <location>
        <position position="52"/>
    </location>
    <ligand>
        <name>aceneuramate</name>
        <dbReference type="ChEBI" id="CHEBI:173083"/>
    </ligand>
</feature>
<feature type="binding site" evidence="2">
    <location>
        <position position="175"/>
    </location>
    <ligand>
        <name>aceneuramate</name>
        <dbReference type="ChEBI" id="CHEBI:173083"/>
    </ligand>
</feature>
<feature type="binding site" evidence="2">
    <location>
        <position position="197"/>
    </location>
    <ligand>
        <name>aceneuramate</name>
        <dbReference type="ChEBI" id="CHEBI:173083"/>
    </ligand>
</feature>
<feature type="binding site" evidence="2">
    <location>
        <position position="199"/>
    </location>
    <ligand>
        <name>aceneuramate</name>
        <dbReference type="ChEBI" id="CHEBI:173083"/>
    </ligand>
</feature>
<feature type="binding site" evidence="2">
    <location>
        <position position="200"/>
    </location>
    <ligand>
        <name>aceneuramate</name>
        <dbReference type="ChEBI" id="CHEBI:173083"/>
    </ligand>
</feature>
<feature type="binding site" evidence="2">
    <location>
        <position position="216"/>
    </location>
    <ligand>
        <name>aceneuramate</name>
        <dbReference type="ChEBI" id="CHEBI:173083"/>
    </ligand>
</feature>
<organism>
    <name type="scientific">Xenopus laevis</name>
    <name type="common">African clawed frog</name>
    <dbReference type="NCBI Taxonomy" id="8355"/>
    <lineage>
        <taxon>Eukaryota</taxon>
        <taxon>Metazoa</taxon>
        <taxon>Chordata</taxon>
        <taxon>Craniata</taxon>
        <taxon>Vertebrata</taxon>
        <taxon>Euteleostomi</taxon>
        <taxon>Amphibia</taxon>
        <taxon>Batrachia</taxon>
        <taxon>Anura</taxon>
        <taxon>Pipoidea</taxon>
        <taxon>Pipidae</taxon>
        <taxon>Xenopodinae</taxon>
        <taxon>Xenopus</taxon>
        <taxon>Xenopus</taxon>
    </lineage>
</organism>
<reference key="1">
    <citation type="submission" date="2004-10" db="EMBL/GenBank/DDBJ databases">
        <authorList>
            <consortium name="NIH - Xenopus Gene Collection (XGC) project"/>
        </authorList>
    </citation>
    <scope>NUCLEOTIDE SEQUENCE [LARGE SCALE MRNA]</scope>
    <source>
        <tissue>Kidney</tissue>
    </source>
</reference>
<gene>
    <name type="primary">npl-b</name>
</gene>
<dbReference type="EC" id="4.1.3.3"/>
<dbReference type="EMBL" id="BC084419">
    <property type="protein sequence ID" value="AAH84419.1"/>
    <property type="molecule type" value="mRNA"/>
</dbReference>
<dbReference type="RefSeq" id="NP_001088349.1">
    <property type="nucleotide sequence ID" value="NM_001094880.1"/>
</dbReference>
<dbReference type="SMR" id="Q5XGL8"/>
<dbReference type="DNASU" id="495191"/>
<dbReference type="AGR" id="Xenbase:XB-GENE-6254295"/>
<dbReference type="Xenbase" id="XB-GENE-6254295">
    <property type="gene designation" value="npl.S"/>
</dbReference>
<dbReference type="UniPathway" id="UPA00629"/>
<dbReference type="Proteomes" id="UP000186698">
    <property type="component" value="Unplaced"/>
</dbReference>
<dbReference type="Bgee" id="495191">
    <property type="expression patterns" value="Expressed in kidney and 18 other cell types or tissues"/>
</dbReference>
<dbReference type="GO" id="GO:0005737">
    <property type="term" value="C:cytoplasm"/>
    <property type="evidence" value="ECO:0007669"/>
    <property type="project" value="UniProtKB-SubCell"/>
</dbReference>
<dbReference type="GO" id="GO:0008747">
    <property type="term" value="F:N-acetylneuraminate lyase activity"/>
    <property type="evidence" value="ECO:0000250"/>
    <property type="project" value="UniProtKB"/>
</dbReference>
<dbReference type="GO" id="GO:0019262">
    <property type="term" value="P:N-acetylneuraminate catabolic process"/>
    <property type="evidence" value="ECO:0000318"/>
    <property type="project" value="GO_Central"/>
</dbReference>
<dbReference type="FunFam" id="3.20.20.70:FF:000133">
    <property type="entry name" value="N-acetylneuraminate pyruvate lyase"/>
    <property type="match status" value="1"/>
</dbReference>
<dbReference type="Gene3D" id="3.20.20.70">
    <property type="entry name" value="Aldolase class I"/>
    <property type="match status" value="1"/>
</dbReference>
<dbReference type="InterPro" id="IPR013785">
    <property type="entry name" value="Aldolase_TIM"/>
</dbReference>
<dbReference type="InterPro" id="IPR002220">
    <property type="entry name" value="DapA-like"/>
</dbReference>
<dbReference type="PANTHER" id="PTHR12128">
    <property type="entry name" value="DIHYDRODIPICOLINATE SYNTHASE"/>
    <property type="match status" value="1"/>
</dbReference>
<dbReference type="PANTHER" id="PTHR12128:SF21">
    <property type="entry name" value="N-ACETYLNEURAMINATE LYASE"/>
    <property type="match status" value="1"/>
</dbReference>
<dbReference type="Pfam" id="PF00701">
    <property type="entry name" value="DHDPS"/>
    <property type="match status" value="1"/>
</dbReference>
<dbReference type="PIRSF" id="PIRSF001365">
    <property type="entry name" value="DHDPS"/>
    <property type="match status" value="1"/>
</dbReference>
<dbReference type="SMART" id="SM01130">
    <property type="entry name" value="DHDPS"/>
    <property type="match status" value="1"/>
</dbReference>
<dbReference type="SUPFAM" id="SSF51569">
    <property type="entry name" value="Aldolase"/>
    <property type="match status" value="1"/>
</dbReference>
<comment type="function">
    <text evidence="1">Catalyzes the cleavage of N-acetylneuraminic acid (sialic acid) to form pyruvate and N-acetylmannosamine via a Schiff base intermediate. It prevents sialic acids from being recycled and returning to the cell surface. Involved in the N-glycolylneuraminic acid (Neu5Gc) degradation pathway (By similarity).</text>
</comment>
<comment type="catalytic activity">
    <reaction>
        <text>aceneuramate = aldehydo-N-acetyl-D-mannosamine + pyruvate</text>
        <dbReference type="Rhea" id="RHEA:23296"/>
        <dbReference type="ChEBI" id="CHEBI:15361"/>
        <dbReference type="ChEBI" id="CHEBI:17122"/>
        <dbReference type="ChEBI" id="CHEBI:173083"/>
        <dbReference type="EC" id="4.1.3.3"/>
    </reaction>
</comment>
<comment type="pathway">
    <text>Amino-sugar metabolism; N-acetylneuraminate degradation.</text>
</comment>
<comment type="subunit">
    <text evidence="1">Homotetramer.</text>
</comment>
<comment type="subcellular location">
    <subcellularLocation>
        <location evidence="1">Cytoplasm</location>
    </subcellularLocation>
</comment>
<comment type="similarity">
    <text evidence="3">Belongs to the DapA family. NanA subfamily.</text>
</comment>
<proteinExistence type="evidence at transcript level"/>